<sequence length="970" mass="109006">MAQLERSAISGFSSKSRRNSFAYDVKREVYNEETFQQEHKRKASSSGNMNINITTFRHHVQCRCSWHRFLRCVLTIFPFLEWMCMYRLKDWLLGDLLAGISVGLVQVPQGLTLSLLARQLIPPLNIAYAAFCSSVIYVIFGSCHQMSIGSFFLVSALLINVLKVSPFNNGQLVMGSFVKNEFSAPSYLMGYNKSLSVVATTTFLTGIIQLIMGVLGLGFIATYLPESAMSAYLAAVALHIMLSQLTFIFGIMISFHAGPISFFYDIINYCVALPKANSTSILVFLTVVVALRINKCIRISFNQYPIEFPMELFLIIGFTVIANKISMATETSQTLIDMIPYSFLLPVTPDFSLLPKIILQAFSLSLVSSFLLIFLGKKIASLHNYSVNSNQDLIAIGLCNVVSSFFRSCVFTGAIARTIIQDKSGGRQQFASLVGAGVMLLLMVKMGHFFYTLPNAVLAGIILSNVIPYLETISNLPSLWRQDQYDCALWMMTFSSSIFLGLDIGLIISVVSAFFITTVRSHRAKILLLGQIPNTNIYRSINDYREIITIPGVKIFQCCSSITFVNVYYLKHKLLKEVDMVKVPLKEEEIFSLFNSSDTNLQGGKICRCFCNCDDLEPLPRILYTERFENKLDPEASSINLIHCSHFESMNTSQTASEDQVPYTVSSVSQKNQGQQYEEVEEVWLPNNSSRNSSPGLPDVAESQGRRSLIPYSDASLLPSVHTIILDFSMVHYVDSRGLVVLRQICNAFQNANILILIAGCHSSIVRAFERNDFFDAGITKTQLFLSVHDAVLFALSRKVIGSSELSIDESETVIRETYSETDKNDNSRYKMSSSFLGSQKNVSPGFIKIQQPVEEESELDLELESEQEAGLGLDLDLDRELEPEMEPKAETETKTQTEMEPQPETEPEMEPNPKSRPRAHTFPQQRYWPMYHPSMASTQSQTQTRTWSVERRRHPMDSYSPEGNSNEDV</sequence>
<name>S26A8_HUMAN</name>
<comment type="function">
    <text evidence="1 5 6 12 13">Antiporter that mediates the exchange of sulfate and oxalate against chloride ions across a membrane (PubMed:11278976, PubMed:11834742). Stimulates anion transport activity of CFTR (PubMed:22121115, PubMed:23582645). May cooperate with CFTR in the regulation of chloride and bicarbonate ions fluxes required for activation of the ADCY10/PKA pathway during sperm motility and sperm capacitation (By similarity). May play a role in sperm tail differentiation and motility and hence male fertility (By similarity).</text>
</comment>
<comment type="catalytic activity">
    <reaction evidence="5 20">
        <text>sulfate(out) + chloride(in) = sulfate(in) + chloride(out)</text>
        <dbReference type="Rhea" id="RHEA:75295"/>
        <dbReference type="ChEBI" id="CHEBI:16189"/>
        <dbReference type="ChEBI" id="CHEBI:17996"/>
    </reaction>
</comment>
<comment type="catalytic activity">
    <reaction evidence="20">
        <text>oxalate(in) + chloride(out) = oxalate(out) + chloride(in)</text>
        <dbReference type="Rhea" id="RHEA:72263"/>
        <dbReference type="ChEBI" id="CHEBI:17996"/>
        <dbReference type="ChEBI" id="CHEBI:30623"/>
    </reaction>
</comment>
<comment type="activity regulation">
    <text evidence="5">Activity is inhibited by 4,4'-Di-isothiocyanatostilbene-2,2'-disulfonic acid (DIDS - an inhibitor of several anion channels and transporters) and gluconate.</text>
</comment>
<comment type="subunit">
    <text evidence="5 12 13">Interacts with RACGAP1 (PubMed:11278976). Interacts with CFTR; stimulates anion transport activity of CFTR (PubMed:22121115, PubMed:23582645).</text>
</comment>
<comment type="interaction">
    <interactant intactId="EBI-1792052">
        <id>Q96RN1</id>
    </interactant>
    <interactant intactId="EBI-349854">
        <id>P13569</id>
        <label>CFTR</label>
    </interactant>
    <organismsDiffer>false</organismsDiffer>
    <experiments>2</experiments>
</comment>
<comment type="interaction">
    <interactant intactId="EBI-1792052">
        <id>Q96RN1</id>
    </interactant>
    <interactant intactId="EBI-717233">
        <id>Q9H0H5</id>
        <label>RACGAP1</label>
    </interactant>
    <organismsDiffer>false</organismsDiffer>
    <experiments>2</experiments>
</comment>
<comment type="subcellular location">
    <subcellularLocation>
        <location evidence="5">Membrane</location>
        <topology evidence="2">Multi-pass membrane protein</topology>
    </subcellularLocation>
    <text evidence="11 12 13">Located at both the annulus and the equatorial segment of the human sperm head.</text>
</comment>
<comment type="alternative products">
    <event type="alternative splicing"/>
    <isoform>
        <id>Q96RN1-1</id>
        <name evidence="5 6 14">1</name>
        <sequence type="displayed"/>
    </isoform>
    <isoform>
        <id>Q96RN1-2</id>
        <name evidence="9">2</name>
        <sequence type="described" ref="VSP_052705"/>
    </isoform>
    <isoform>
        <id>Q96RN1-3</id>
        <name evidence="7">3</name>
        <sequence type="described" ref="VSP_052704 VSP_052706"/>
    </isoform>
    <isoform>
        <id>Q96RN1-4</id>
        <name evidence="8">4</name>
        <sequence type="described" ref="VSP_052707 VSP_052708"/>
    </isoform>
</comment>
<comment type="tissue specificity">
    <text evidence="5 6">Expression observed exclusively in testis, restricted to the meiotic phase of the germ cell (PubMed:11834742). Abundant expression located in the seminiferous tubules, concentrated on the luminal side of the tubuli harboring the spermatocytes and spermatids (PubMed:11278976, PubMed:11834742).</text>
</comment>
<comment type="induction">
    <text evidence="5">Repressed by tunicamycin, an inhibitor of N-glycosylation.</text>
</comment>
<comment type="PTM">
    <text evidence="5">N-glycosylated.</text>
</comment>
<comment type="disease" evidence="13">
    <disease id="DI-03796">
        <name>Spermatogenic failure 3</name>
        <acronym>SPGF3</acronym>
        <description>A disorder characterized by primary infertility, sperm morphologic abnormalities, and moderate to severe asthenozoospermia, condition in which the percentage of progressively motile sperm is abnormally low.</description>
        <dbReference type="MIM" id="606766"/>
    </disease>
    <text>The disease is caused by variants affecting the gene represented in this entry.</text>
</comment>
<comment type="similarity">
    <text evidence="2">Belongs to the SLC26A/SulP transporter (TC 2.A.53) family.</text>
</comment>
<comment type="sequence caution" evidence="19">
    <conflict type="miscellaneous discrepancy">
        <sequence resource="EMBL-CDS" id="AAO26699"/>
    </conflict>
    <text>Incorrectly indicated as originating from mouse.</text>
</comment>
<comment type="sequence caution" evidence="19">
    <conflict type="erroneous initiation">
        <sequence resource="EMBL-CDS" id="BAB71408"/>
    </conflict>
    <text>Truncated N-terminus.</text>
</comment>
<protein>
    <recommendedName>
        <fullName evidence="15">Testis anion transporter 1</fullName>
    </recommendedName>
    <alternativeName>
        <fullName>Anion exchange transporter</fullName>
    </alternativeName>
    <alternativeName>
        <fullName>Solute carrier family 26 member 8</fullName>
    </alternativeName>
</protein>
<keyword id="KW-0025">Alternative splicing</keyword>
<keyword id="KW-0039">Anion exchange</keyword>
<keyword id="KW-0217">Developmental protein</keyword>
<keyword id="KW-0221">Differentiation</keyword>
<keyword id="KW-0325">Glycoprotein</keyword>
<keyword id="KW-0406">Ion transport</keyword>
<keyword id="KW-0469">Meiosis</keyword>
<keyword id="KW-0472">Membrane</keyword>
<keyword id="KW-1267">Proteomics identification</keyword>
<keyword id="KW-1185">Reference proteome</keyword>
<keyword id="KW-0744">Spermatogenesis</keyword>
<keyword id="KW-0812">Transmembrane</keyword>
<keyword id="KW-1133">Transmembrane helix</keyword>
<keyword id="KW-0813">Transport</keyword>
<accession>Q96RN1</accession>
<accession>Q5JVR5</accession>
<accession>Q812C7</accession>
<accession>Q8TC65</accession>
<accession>Q96MA0</accession>
<accession>Q96PK8</accession>
<proteinExistence type="evidence at protein level"/>
<organism>
    <name type="scientific">Homo sapiens</name>
    <name type="common">Human</name>
    <dbReference type="NCBI Taxonomy" id="9606"/>
    <lineage>
        <taxon>Eukaryota</taxon>
        <taxon>Metazoa</taxon>
        <taxon>Chordata</taxon>
        <taxon>Craniata</taxon>
        <taxon>Vertebrata</taxon>
        <taxon>Euteleostomi</taxon>
        <taxon>Mammalia</taxon>
        <taxon>Eutheria</taxon>
        <taxon>Euarchontoglires</taxon>
        <taxon>Primates</taxon>
        <taxon>Haplorrhini</taxon>
        <taxon>Catarrhini</taxon>
        <taxon>Hominidae</taxon>
        <taxon>Homo</taxon>
    </lineage>
</organism>
<dbReference type="EMBL" id="AF331522">
    <property type="protein sequence ID" value="AAK95666.1"/>
    <property type="molecule type" value="mRNA"/>
</dbReference>
<dbReference type="EMBL" id="AF314959">
    <property type="protein sequence ID" value="AAL26868.1"/>
    <property type="molecule type" value="mRNA"/>
</dbReference>
<dbReference type="EMBL" id="AF403499">
    <property type="protein sequence ID" value="AAO26699.1"/>
    <property type="status" value="ALT_SEQ"/>
    <property type="molecule type" value="mRNA"/>
</dbReference>
<dbReference type="EMBL" id="AL133507">
    <property type="status" value="NOT_ANNOTATED_CDS"/>
    <property type="molecule type" value="Genomic_DNA"/>
</dbReference>
<dbReference type="EMBL" id="Z95152">
    <property type="status" value="NOT_ANNOTATED_CDS"/>
    <property type="molecule type" value="Genomic_DNA"/>
</dbReference>
<dbReference type="EMBL" id="CH471081">
    <property type="protein sequence ID" value="EAX03862.1"/>
    <property type="molecule type" value="Genomic_DNA"/>
</dbReference>
<dbReference type="EMBL" id="BC025408">
    <property type="protein sequence ID" value="AAH25408.1"/>
    <property type="molecule type" value="mRNA"/>
</dbReference>
<dbReference type="EMBL" id="AK057276">
    <property type="protein sequence ID" value="BAB71408.1"/>
    <property type="status" value="ALT_INIT"/>
    <property type="molecule type" value="mRNA"/>
</dbReference>
<dbReference type="CCDS" id="CCDS4813.1">
    <molecule id="Q96RN1-1"/>
</dbReference>
<dbReference type="CCDS" id="CCDS4814.1">
    <molecule id="Q96RN1-2"/>
</dbReference>
<dbReference type="RefSeq" id="NP_001180405.1">
    <molecule id="Q96RN1-1"/>
    <property type="nucleotide sequence ID" value="NM_001193476.2"/>
</dbReference>
<dbReference type="RefSeq" id="NP_443193.1">
    <molecule id="Q96RN1-1"/>
    <property type="nucleotide sequence ID" value="NM_052961.4"/>
</dbReference>
<dbReference type="RefSeq" id="NP_619732.2">
    <molecule id="Q96RN1-2"/>
    <property type="nucleotide sequence ID" value="NM_138718.3"/>
</dbReference>
<dbReference type="RefSeq" id="XP_016865724.1">
    <molecule id="Q96RN1-1"/>
    <property type="nucleotide sequence ID" value="XM_017010235.2"/>
</dbReference>
<dbReference type="RefSeq" id="XP_054210165.1">
    <molecule id="Q96RN1-1"/>
    <property type="nucleotide sequence ID" value="XM_054354190.1"/>
</dbReference>
<dbReference type="SMR" id="Q96RN1"/>
<dbReference type="BioGRID" id="125501">
    <property type="interactions" value="2"/>
</dbReference>
<dbReference type="FunCoup" id="Q96RN1">
    <property type="interactions" value="56"/>
</dbReference>
<dbReference type="IntAct" id="Q96RN1">
    <property type="interactions" value="2"/>
</dbReference>
<dbReference type="STRING" id="9606.ENSP00000347778"/>
<dbReference type="TCDB" id="2.A.53.2.14">
    <property type="family name" value="the sulfate permease (sulp) family"/>
</dbReference>
<dbReference type="GlyCosmos" id="Q96RN1">
    <property type="glycosylation" value="1 site, No reported glycans"/>
</dbReference>
<dbReference type="GlyGen" id="Q96RN1">
    <property type="glycosylation" value="3 sites, 1 N-linked glycan (1 site), 1 O-linked glycan (1 site)"/>
</dbReference>
<dbReference type="iPTMnet" id="Q96RN1"/>
<dbReference type="PhosphoSitePlus" id="Q96RN1"/>
<dbReference type="BioMuta" id="SLC26A8"/>
<dbReference type="DMDM" id="74761075"/>
<dbReference type="MassIVE" id="Q96RN1"/>
<dbReference type="PaxDb" id="9606-ENSP00000417638"/>
<dbReference type="PeptideAtlas" id="Q96RN1"/>
<dbReference type="ProteomicsDB" id="77989">
    <molecule id="Q96RN1-1"/>
</dbReference>
<dbReference type="ProteomicsDB" id="77990">
    <molecule id="Q96RN1-2"/>
</dbReference>
<dbReference type="ProteomicsDB" id="77991">
    <molecule id="Q96RN1-3"/>
</dbReference>
<dbReference type="ProteomicsDB" id="77992">
    <molecule id="Q96RN1-4"/>
</dbReference>
<dbReference type="Antibodypedia" id="29584">
    <property type="antibodies" value="94 antibodies from 17 providers"/>
</dbReference>
<dbReference type="DNASU" id="116369"/>
<dbReference type="Ensembl" id="ENST00000355574.6">
    <molecule id="Q96RN1-1"/>
    <property type="protein sequence ID" value="ENSP00000347778.2"/>
    <property type="gene ID" value="ENSG00000112053.14"/>
</dbReference>
<dbReference type="Ensembl" id="ENST00000394602.6">
    <molecule id="Q96RN1-2"/>
    <property type="protein sequence ID" value="ENSP00000378100.2"/>
    <property type="gene ID" value="ENSG00000112053.14"/>
</dbReference>
<dbReference type="Ensembl" id="ENST00000490799.6">
    <molecule id="Q96RN1-1"/>
    <property type="protein sequence ID" value="ENSP00000417638.1"/>
    <property type="gene ID" value="ENSG00000112053.14"/>
</dbReference>
<dbReference type="GeneID" id="116369"/>
<dbReference type="KEGG" id="hsa:116369"/>
<dbReference type="MANE-Select" id="ENST00000490799.6">
    <property type="protein sequence ID" value="ENSP00000417638.1"/>
    <property type="RefSeq nucleotide sequence ID" value="NM_052961.4"/>
    <property type="RefSeq protein sequence ID" value="NP_443193.1"/>
</dbReference>
<dbReference type="UCSC" id="uc003oll.4">
    <molecule id="Q96RN1-1"/>
    <property type="organism name" value="human"/>
</dbReference>
<dbReference type="AGR" id="HGNC:14468"/>
<dbReference type="CTD" id="116369"/>
<dbReference type="DisGeNET" id="116369"/>
<dbReference type="GeneCards" id="SLC26A8"/>
<dbReference type="HGNC" id="HGNC:14468">
    <property type="gene designation" value="SLC26A8"/>
</dbReference>
<dbReference type="HPA" id="ENSG00000112053">
    <property type="expression patterns" value="Tissue enriched (testis)"/>
</dbReference>
<dbReference type="MalaCards" id="SLC26A8"/>
<dbReference type="MIM" id="606766">
    <property type="type" value="phenotype"/>
</dbReference>
<dbReference type="MIM" id="608480">
    <property type="type" value="gene"/>
</dbReference>
<dbReference type="neXtProt" id="NX_Q96RN1"/>
<dbReference type="OpenTargets" id="ENSG00000112053"/>
<dbReference type="Orphanet" id="276234">
    <property type="disease" value="Non-syndromic male infertility due to sperm motility disorder"/>
</dbReference>
<dbReference type="PharmGKB" id="PA37885"/>
<dbReference type="VEuPathDB" id="HostDB:ENSG00000112053"/>
<dbReference type="eggNOG" id="KOG0236">
    <property type="taxonomic scope" value="Eukaryota"/>
</dbReference>
<dbReference type="GeneTree" id="ENSGT01120000271864"/>
<dbReference type="HOGENOM" id="CLU_003182_9_3_1"/>
<dbReference type="InParanoid" id="Q96RN1"/>
<dbReference type="OMA" id="MFPILNW"/>
<dbReference type="OrthoDB" id="288203at2759"/>
<dbReference type="PAN-GO" id="Q96RN1">
    <property type="GO annotations" value="6 GO annotations based on evolutionary models"/>
</dbReference>
<dbReference type="PhylomeDB" id="Q96RN1"/>
<dbReference type="TreeFam" id="TF313784"/>
<dbReference type="PathwayCommons" id="Q96RN1"/>
<dbReference type="SignaLink" id="Q96RN1"/>
<dbReference type="BioGRID-ORCS" id="116369">
    <property type="hits" value="18 hits in 1138 CRISPR screens"/>
</dbReference>
<dbReference type="ChiTaRS" id="SLC26A8">
    <property type="organism name" value="human"/>
</dbReference>
<dbReference type="GeneWiki" id="SLC26A8"/>
<dbReference type="GenomeRNAi" id="116369"/>
<dbReference type="Pharos" id="Q96RN1">
    <property type="development level" value="Tbio"/>
</dbReference>
<dbReference type="PRO" id="PR:Q96RN1"/>
<dbReference type="Proteomes" id="UP000005640">
    <property type="component" value="Chromosome 6"/>
</dbReference>
<dbReference type="RNAct" id="Q96RN1">
    <property type="molecule type" value="protein"/>
</dbReference>
<dbReference type="Bgee" id="ENSG00000112053">
    <property type="expression patterns" value="Expressed in left testis and 100 other cell types or tissues"/>
</dbReference>
<dbReference type="ExpressionAtlas" id="Q96RN1">
    <property type="expression patterns" value="baseline and differential"/>
</dbReference>
<dbReference type="GO" id="GO:0005886">
    <property type="term" value="C:plasma membrane"/>
    <property type="evidence" value="ECO:0000314"/>
    <property type="project" value="UniProtKB"/>
</dbReference>
<dbReference type="GO" id="GO:0097227">
    <property type="term" value="C:sperm annulus"/>
    <property type="evidence" value="ECO:0000314"/>
    <property type="project" value="UniProtKB"/>
</dbReference>
<dbReference type="GO" id="GO:0015106">
    <property type="term" value="F:bicarbonate transmembrane transporter activity"/>
    <property type="evidence" value="ECO:0000318"/>
    <property type="project" value="GO_Central"/>
</dbReference>
<dbReference type="GO" id="GO:0005254">
    <property type="term" value="F:chloride channel activity"/>
    <property type="evidence" value="ECO:0000314"/>
    <property type="project" value="UniProtKB"/>
</dbReference>
<dbReference type="GO" id="GO:0015108">
    <property type="term" value="F:chloride transmembrane transporter activity"/>
    <property type="evidence" value="ECO:0000318"/>
    <property type="project" value="GO_Central"/>
</dbReference>
<dbReference type="GO" id="GO:0019531">
    <property type="term" value="F:oxalate transmembrane transporter activity"/>
    <property type="evidence" value="ECO:0000314"/>
    <property type="project" value="UniProtKB"/>
</dbReference>
<dbReference type="GO" id="GO:0015116">
    <property type="term" value="F:sulfate transmembrane transporter activity"/>
    <property type="evidence" value="ECO:0000314"/>
    <property type="project" value="UniProtKB"/>
</dbReference>
<dbReference type="GO" id="GO:0160044">
    <property type="term" value="F:sulfate:chloride antiporter activity"/>
    <property type="evidence" value="ECO:0000314"/>
    <property type="project" value="UniProtKB"/>
</dbReference>
<dbReference type="GO" id="GO:0030154">
    <property type="term" value="P:cell differentiation"/>
    <property type="evidence" value="ECO:0007669"/>
    <property type="project" value="UniProtKB-KW"/>
</dbReference>
<dbReference type="GO" id="GO:1902476">
    <property type="term" value="P:chloride transmembrane transport"/>
    <property type="evidence" value="ECO:0000318"/>
    <property type="project" value="GO_Central"/>
</dbReference>
<dbReference type="GO" id="GO:0006821">
    <property type="term" value="P:chloride transport"/>
    <property type="evidence" value="ECO:0000314"/>
    <property type="project" value="UniProtKB"/>
</dbReference>
<dbReference type="GO" id="GO:0051321">
    <property type="term" value="P:meiotic cell cycle"/>
    <property type="evidence" value="ECO:0007669"/>
    <property type="project" value="UniProtKB-KW"/>
</dbReference>
<dbReference type="GO" id="GO:0019532">
    <property type="term" value="P:oxalate transport"/>
    <property type="evidence" value="ECO:0000314"/>
    <property type="project" value="UniProtKB"/>
</dbReference>
<dbReference type="GO" id="GO:0007283">
    <property type="term" value="P:spermatogenesis"/>
    <property type="evidence" value="ECO:0007669"/>
    <property type="project" value="UniProtKB-KW"/>
</dbReference>
<dbReference type="GO" id="GO:1902358">
    <property type="term" value="P:sulfate transmembrane transport"/>
    <property type="evidence" value="ECO:0000314"/>
    <property type="project" value="UniProtKB"/>
</dbReference>
<dbReference type="CDD" id="cd07042">
    <property type="entry name" value="STAS_SulP_like_sulfate_transporter"/>
    <property type="match status" value="1"/>
</dbReference>
<dbReference type="Gene3D" id="3.30.750.24">
    <property type="entry name" value="STAS domain"/>
    <property type="match status" value="1"/>
</dbReference>
<dbReference type="InterPro" id="IPR011547">
    <property type="entry name" value="SLC26A/SulP_dom"/>
</dbReference>
<dbReference type="InterPro" id="IPR001902">
    <property type="entry name" value="SLC26A/SulP_fam"/>
</dbReference>
<dbReference type="InterPro" id="IPR002645">
    <property type="entry name" value="STAS_dom"/>
</dbReference>
<dbReference type="InterPro" id="IPR036513">
    <property type="entry name" value="STAS_dom_sf"/>
</dbReference>
<dbReference type="PANTHER" id="PTHR11814">
    <property type="entry name" value="SULFATE TRANSPORTER"/>
    <property type="match status" value="1"/>
</dbReference>
<dbReference type="Pfam" id="PF01740">
    <property type="entry name" value="STAS"/>
    <property type="match status" value="1"/>
</dbReference>
<dbReference type="Pfam" id="PF00916">
    <property type="entry name" value="Sulfate_transp"/>
    <property type="match status" value="1"/>
</dbReference>
<dbReference type="SUPFAM" id="SSF52091">
    <property type="entry name" value="SpoIIaa-like"/>
    <property type="match status" value="1"/>
</dbReference>
<dbReference type="PROSITE" id="PS50801">
    <property type="entry name" value="STAS"/>
    <property type="match status" value="1"/>
</dbReference>
<reference evidence="19" key="1">
    <citation type="journal article" date="2001" name="J. Biol. Chem.">
        <title>Tat1, a novel sulfate transporter specifically expressed in human male germ cells and potentially linked to rhogtpase signaling.</title>
        <authorList>
            <person name="Toure A."/>
            <person name="Morin L."/>
            <person name="Pineau C."/>
            <person name="Becq F."/>
            <person name="Dorseuil O."/>
            <person name="Gacon G."/>
        </authorList>
    </citation>
    <scope>NUCLEOTIDE SEQUENCE [MRNA] (ISOFORM 1)</scope>
    <scope>FUNCTION</scope>
    <scope>TRANSPORTER ACTIVITY</scope>
    <scope>ACTIVITY REGULATION</scope>
    <scope>INTERACTION WITH RACGAP1</scope>
    <scope>SUBCELLULAR LOCATION</scope>
    <scope>TISSUE SPECIFICITY</scope>
    <scope>INDUCTION</scope>
    <scope>GLYCOSYLATION</scope>
    <scope>VARIANT MET-73</scope>
    <source>
        <tissue evidence="5">Testis</tissue>
    </source>
</reference>
<reference evidence="19 22" key="2">
    <citation type="journal article" date="2002" name="J. Biol. Chem.">
        <title>Functional characterization of three novel tissue-specific anion exchangers SLC26A7, -A8, and -A9.</title>
        <authorList>
            <person name="Lohi H."/>
            <person name="Kujala M."/>
            <person name="Maekelae S."/>
            <person name="Lehtonen E."/>
            <person name="Kestilae M."/>
            <person name="Saarialho-Kere U."/>
            <person name="Markovich D."/>
            <person name="Kere J."/>
        </authorList>
    </citation>
    <scope>NUCLEOTIDE SEQUENCE [MRNA] (ISOFORM 1)</scope>
    <scope>FUNCTION</scope>
    <scope>TRANSPORTER ACTIVITY</scope>
    <scope>TISSUE SPECIFICITY</scope>
    <scope>INHIBITION</scope>
</reference>
<reference evidence="19 23" key="3">
    <citation type="submission" date="2000-10" db="EMBL/GenBank/DDBJ databases">
        <title>Cloning of human SLC26A8, a new member of the sulphate transporter gene family of anion transporter/exchangers.</title>
        <authorList>
            <person name="Mount D.B."/>
        </authorList>
    </citation>
    <scope>NUCLEOTIDE SEQUENCE [MRNA] (ISOFORM 1)</scope>
    <scope>VARIANTS MET-73; VAL-148; ASN-230 AND VAL-639</scope>
</reference>
<reference evidence="25" key="4">
    <citation type="journal article" date="2003" name="Nature">
        <title>The DNA sequence and analysis of human chromosome 6.</title>
        <authorList>
            <person name="Mungall A.J."/>
            <person name="Palmer S.A."/>
            <person name="Sims S.K."/>
            <person name="Edwards C.A."/>
            <person name="Ashurst J.L."/>
            <person name="Wilming L."/>
            <person name="Jones M.C."/>
            <person name="Horton R."/>
            <person name="Hunt S.E."/>
            <person name="Scott C.E."/>
            <person name="Gilbert J.G.R."/>
            <person name="Clamp M.E."/>
            <person name="Bethel G."/>
            <person name="Milne S."/>
            <person name="Ainscough R."/>
            <person name="Almeida J.P."/>
            <person name="Ambrose K.D."/>
            <person name="Andrews T.D."/>
            <person name="Ashwell R.I.S."/>
            <person name="Babbage A.K."/>
            <person name="Bagguley C.L."/>
            <person name="Bailey J."/>
            <person name="Banerjee R."/>
            <person name="Barker D.J."/>
            <person name="Barlow K.F."/>
            <person name="Bates K."/>
            <person name="Beare D.M."/>
            <person name="Beasley H."/>
            <person name="Beasley O."/>
            <person name="Bird C.P."/>
            <person name="Blakey S.E."/>
            <person name="Bray-Allen S."/>
            <person name="Brook J."/>
            <person name="Brown A.J."/>
            <person name="Brown J.Y."/>
            <person name="Burford D.C."/>
            <person name="Burrill W."/>
            <person name="Burton J."/>
            <person name="Carder C."/>
            <person name="Carter N.P."/>
            <person name="Chapman J.C."/>
            <person name="Clark S.Y."/>
            <person name="Clark G."/>
            <person name="Clee C.M."/>
            <person name="Clegg S."/>
            <person name="Cobley V."/>
            <person name="Collier R.E."/>
            <person name="Collins J.E."/>
            <person name="Colman L.K."/>
            <person name="Corby N.R."/>
            <person name="Coville G.J."/>
            <person name="Culley K.M."/>
            <person name="Dhami P."/>
            <person name="Davies J."/>
            <person name="Dunn M."/>
            <person name="Earthrowl M.E."/>
            <person name="Ellington A.E."/>
            <person name="Evans K.A."/>
            <person name="Faulkner L."/>
            <person name="Francis M.D."/>
            <person name="Frankish A."/>
            <person name="Frankland J."/>
            <person name="French L."/>
            <person name="Garner P."/>
            <person name="Garnett J."/>
            <person name="Ghori M.J."/>
            <person name="Gilby L.M."/>
            <person name="Gillson C.J."/>
            <person name="Glithero R.J."/>
            <person name="Grafham D.V."/>
            <person name="Grant M."/>
            <person name="Gribble S."/>
            <person name="Griffiths C."/>
            <person name="Griffiths M.N.D."/>
            <person name="Hall R."/>
            <person name="Halls K.S."/>
            <person name="Hammond S."/>
            <person name="Harley J.L."/>
            <person name="Hart E.A."/>
            <person name="Heath P.D."/>
            <person name="Heathcott R."/>
            <person name="Holmes S.J."/>
            <person name="Howden P.J."/>
            <person name="Howe K.L."/>
            <person name="Howell G.R."/>
            <person name="Huckle E."/>
            <person name="Humphray S.J."/>
            <person name="Humphries M.D."/>
            <person name="Hunt A.R."/>
            <person name="Johnson C.M."/>
            <person name="Joy A.A."/>
            <person name="Kay M."/>
            <person name="Keenan S.J."/>
            <person name="Kimberley A.M."/>
            <person name="King A."/>
            <person name="Laird G.K."/>
            <person name="Langford C."/>
            <person name="Lawlor S."/>
            <person name="Leongamornlert D.A."/>
            <person name="Leversha M."/>
            <person name="Lloyd C.R."/>
            <person name="Lloyd D.M."/>
            <person name="Loveland J.E."/>
            <person name="Lovell J."/>
            <person name="Martin S."/>
            <person name="Mashreghi-Mohammadi M."/>
            <person name="Maslen G.L."/>
            <person name="Matthews L."/>
            <person name="McCann O.T."/>
            <person name="McLaren S.J."/>
            <person name="McLay K."/>
            <person name="McMurray A."/>
            <person name="Moore M.J.F."/>
            <person name="Mullikin J.C."/>
            <person name="Niblett D."/>
            <person name="Nickerson T."/>
            <person name="Novik K.L."/>
            <person name="Oliver K."/>
            <person name="Overton-Larty E.K."/>
            <person name="Parker A."/>
            <person name="Patel R."/>
            <person name="Pearce A.V."/>
            <person name="Peck A.I."/>
            <person name="Phillimore B.J.C.T."/>
            <person name="Phillips S."/>
            <person name="Plumb R.W."/>
            <person name="Porter K.M."/>
            <person name="Ramsey Y."/>
            <person name="Ranby S.A."/>
            <person name="Rice C.M."/>
            <person name="Ross M.T."/>
            <person name="Searle S.M."/>
            <person name="Sehra H.K."/>
            <person name="Sheridan E."/>
            <person name="Skuce C.D."/>
            <person name="Smith S."/>
            <person name="Smith M."/>
            <person name="Spraggon L."/>
            <person name="Squares S.L."/>
            <person name="Steward C.A."/>
            <person name="Sycamore N."/>
            <person name="Tamlyn-Hall G."/>
            <person name="Tester J."/>
            <person name="Theaker A.J."/>
            <person name="Thomas D.W."/>
            <person name="Thorpe A."/>
            <person name="Tracey A."/>
            <person name="Tromans A."/>
            <person name="Tubby B."/>
            <person name="Wall M."/>
            <person name="Wallis J.M."/>
            <person name="West A.P."/>
            <person name="White S.S."/>
            <person name="Whitehead S.L."/>
            <person name="Whittaker H."/>
            <person name="Wild A."/>
            <person name="Willey D.J."/>
            <person name="Wilmer T.E."/>
            <person name="Wood J.M."/>
            <person name="Wray P.W."/>
            <person name="Wyatt J.C."/>
            <person name="Young L."/>
            <person name="Younger R.M."/>
            <person name="Bentley D.R."/>
            <person name="Coulson A."/>
            <person name="Durbin R.M."/>
            <person name="Hubbard T."/>
            <person name="Sulston J.E."/>
            <person name="Dunham I."/>
            <person name="Rogers J."/>
            <person name="Beck S."/>
        </authorList>
    </citation>
    <scope>NUCLEOTIDE SEQUENCE [LARGE SCALE GENOMIC DNA]</scope>
</reference>
<reference evidence="19 23" key="5">
    <citation type="submission" date="2005-07" db="EMBL/GenBank/DDBJ databases">
        <authorList>
            <person name="Mural R.J."/>
            <person name="Istrail S."/>
            <person name="Sutton G.G."/>
            <person name="Florea L."/>
            <person name="Halpern A.L."/>
            <person name="Mobarry C.M."/>
            <person name="Lippert R."/>
            <person name="Walenz B."/>
            <person name="Shatkay H."/>
            <person name="Dew I."/>
            <person name="Miller J.R."/>
            <person name="Flanigan M.J."/>
            <person name="Edwards N.J."/>
            <person name="Bolanos R."/>
            <person name="Fasulo D."/>
            <person name="Halldorsson B.V."/>
            <person name="Hannenhalli S."/>
            <person name="Turner R."/>
            <person name="Yooseph S."/>
            <person name="Lu F."/>
            <person name="Nusskern D.R."/>
            <person name="Shue B.C."/>
            <person name="Zheng X.H."/>
            <person name="Zhong F."/>
            <person name="Delcher A.L."/>
            <person name="Huson D.H."/>
            <person name="Kravitz S.A."/>
            <person name="Mouchard L."/>
            <person name="Reinert K."/>
            <person name="Remington K.A."/>
            <person name="Clark A.G."/>
            <person name="Waterman M.S."/>
            <person name="Eichler E.E."/>
            <person name="Adams M.D."/>
            <person name="Hunkapiller M.W."/>
            <person name="Myers E.W."/>
            <person name="Venter J.C."/>
        </authorList>
    </citation>
    <scope>NUCLEOTIDE SEQUENCE [LARGE SCALE GENOMIC DNA]</scope>
</reference>
<reference evidence="19 21" key="6">
    <citation type="journal article" date="2004" name="Genome Res.">
        <title>The status, quality, and expansion of the NIH full-length cDNA project: the Mammalian Gene Collection (MGC).</title>
        <authorList>
            <consortium name="The MGC Project Team"/>
        </authorList>
    </citation>
    <scope>NUCLEOTIDE SEQUENCE [LARGE SCALE MRNA] (ISOFORM 2)</scope>
    <scope>VARIANTS MET-73 AND VAL-639</scope>
    <source>
        <tissue evidence="21">Testis</tissue>
    </source>
</reference>
<reference evidence="19 24" key="7">
    <citation type="journal article" date="2004" name="Nat. Genet.">
        <title>Complete sequencing and characterization of 21,243 full-length human cDNAs.</title>
        <authorList>
            <person name="Ota T."/>
            <person name="Suzuki Y."/>
            <person name="Nishikawa T."/>
            <person name="Otsuki T."/>
            <person name="Sugiyama T."/>
            <person name="Irie R."/>
            <person name="Wakamatsu A."/>
            <person name="Hayashi K."/>
            <person name="Sato H."/>
            <person name="Nagai K."/>
            <person name="Kimura K."/>
            <person name="Makita H."/>
            <person name="Sekine M."/>
            <person name="Obayashi M."/>
            <person name="Nishi T."/>
            <person name="Shibahara T."/>
            <person name="Tanaka T."/>
            <person name="Ishii S."/>
            <person name="Yamamoto J."/>
            <person name="Saito K."/>
            <person name="Kawai Y."/>
            <person name="Isono Y."/>
            <person name="Nakamura Y."/>
            <person name="Nagahari K."/>
            <person name="Murakami K."/>
            <person name="Yasuda T."/>
            <person name="Iwayanagi T."/>
            <person name="Wagatsuma M."/>
            <person name="Shiratori A."/>
            <person name="Sudo H."/>
            <person name="Hosoiri T."/>
            <person name="Kaku Y."/>
            <person name="Kodaira H."/>
            <person name="Kondo H."/>
            <person name="Sugawara M."/>
            <person name="Takahashi M."/>
            <person name="Kanda K."/>
            <person name="Yokoi T."/>
            <person name="Furuya T."/>
            <person name="Kikkawa E."/>
            <person name="Omura Y."/>
            <person name="Abe K."/>
            <person name="Kamihara K."/>
            <person name="Katsuta N."/>
            <person name="Sato K."/>
            <person name="Tanikawa M."/>
            <person name="Yamazaki M."/>
            <person name="Ninomiya K."/>
            <person name="Ishibashi T."/>
            <person name="Yamashita H."/>
            <person name="Murakawa K."/>
            <person name="Fujimori K."/>
            <person name="Tanai H."/>
            <person name="Kimata M."/>
            <person name="Watanabe M."/>
            <person name="Hiraoka S."/>
            <person name="Chiba Y."/>
            <person name="Ishida S."/>
            <person name="Ono Y."/>
            <person name="Takiguchi S."/>
            <person name="Watanabe S."/>
            <person name="Yosida M."/>
            <person name="Hotuta T."/>
            <person name="Kusano J."/>
            <person name="Kanehori K."/>
            <person name="Takahashi-Fujii A."/>
            <person name="Hara H."/>
            <person name="Tanase T.-O."/>
            <person name="Nomura Y."/>
            <person name="Togiya S."/>
            <person name="Komai F."/>
            <person name="Hara R."/>
            <person name="Takeuchi K."/>
            <person name="Arita M."/>
            <person name="Imose N."/>
            <person name="Musashino K."/>
            <person name="Yuuki H."/>
            <person name="Oshima A."/>
            <person name="Sasaki N."/>
            <person name="Aotsuka S."/>
            <person name="Yoshikawa Y."/>
            <person name="Matsunawa H."/>
            <person name="Ichihara T."/>
            <person name="Shiohata N."/>
            <person name="Sano S."/>
            <person name="Moriya S."/>
            <person name="Momiyama H."/>
            <person name="Satoh N."/>
            <person name="Takami S."/>
            <person name="Terashima Y."/>
            <person name="Suzuki O."/>
            <person name="Nakagawa S."/>
            <person name="Senoh A."/>
            <person name="Mizoguchi H."/>
            <person name="Goto Y."/>
            <person name="Shimizu F."/>
            <person name="Wakebe H."/>
            <person name="Hishigaki H."/>
            <person name="Watanabe T."/>
            <person name="Sugiyama A."/>
            <person name="Takemoto M."/>
            <person name="Kawakami B."/>
            <person name="Yamazaki M."/>
            <person name="Watanabe K."/>
            <person name="Kumagai A."/>
            <person name="Itakura S."/>
            <person name="Fukuzumi Y."/>
            <person name="Fujimori Y."/>
            <person name="Komiyama M."/>
            <person name="Tashiro H."/>
            <person name="Tanigami A."/>
            <person name="Fujiwara T."/>
            <person name="Ono T."/>
            <person name="Yamada K."/>
            <person name="Fujii Y."/>
            <person name="Ozaki K."/>
            <person name="Hirao M."/>
            <person name="Ohmori Y."/>
            <person name="Kawabata A."/>
            <person name="Hikiji T."/>
            <person name="Kobatake N."/>
            <person name="Inagaki H."/>
            <person name="Ikema Y."/>
            <person name="Okamoto S."/>
            <person name="Okitani R."/>
            <person name="Kawakami T."/>
            <person name="Noguchi S."/>
            <person name="Itoh T."/>
            <person name="Shigeta K."/>
            <person name="Senba T."/>
            <person name="Matsumura K."/>
            <person name="Nakajima Y."/>
            <person name="Mizuno T."/>
            <person name="Morinaga M."/>
            <person name="Sasaki M."/>
            <person name="Togashi T."/>
            <person name="Oyama M."/>
            <person name="Hata H."/>
            <person name="Watanabe M."/>
            <person name="Komatsu T."/>
            <person name="Mizushima-Sugano J."/>
            <person name="Satoh T."/>
            <person name="Shirai Y."/>
            <person name="Takahashi Y."/>
            <person name="Nakagawa K."/>
            <person name="Okumura K."/>
            <person name="Nagase T."/>
            <person name="Nomura N."/>
            <person name="Kikuchi H."/>
            <person name="Masuho Y."/>
            <person name="Yamashita R."/>
            <person name="Nakai K."/>
            <person name="Yada T."/>
            <person name="Nakamura Y."/>
            <person name="Ohara O."/>
            <person name="Isogai T."/>
            <person name="Sugano S."/>
        </authorList>
    </citation>
    <scope>NUCLEOTIDE SEQUENCE [LARGE SCALE MRNA] OF 450-768 (ISOFORM 4)</scope>
    <source>
        <tissue evidence="24">Testis</tissue>
    </source>
</reference>
<reference key="8">
    <citation type="journal article" date="2012" name="Hum. Mol. Genet.">
        <title>The testis anion transporter TAT1 (SLC26A8) physically and functionally interacts with the cystic fibrosis transmembrane conductance regulator channel: a potential role during sperm capacitation.</title>
        <authorList>
            <person name="Rode B."/>
            <person name="Dirami T."/>
            <person name="Bakouh N."/>
            <person name="Rizk-Rabin M."/>
            <person name="Norez C."/>
            <person name="Lhuillier P."/>
            <person name="Lores P."/>
            <person name="Jollivet M."/>
            <person name="Melin P."/>
            <person name="Zvetkova I."/>
            <person name="Bienvenu T."/>
            <person name="Becq F."/>
            <person name="Planelles G."/>
            <person name="Edelman A."/>
            <person name="Gacon G."/>
            <person name="Toure A."/>
        </authorList>
    </citation>
    <scope>INTERACTION WITH CFTR</scope>
</reference>
<reference evidence="19" key="9">
    <citation type="journal article" date="2005" name="Mol. Hum. Reprod.">
        <title>Mutational analysis of the human SLC26A8 gene: exclusion as a candidate for male infertility due to primary spermatogenic failure.</title>
        <authorList>
            <person name="Makela S."/>
            <person name="Eklund R."/>
            <person name="Lahdetie J."/>
            <person name="Mikkola M."/>
            <person name="Hovatta O."/>
            <person name="Kere J."/>
        </authorList>
    </citation>
    <scope>VARIANTS MET-73; VAL-148; ASN-230 AND VAL-639</scope>
    <scope>MUTAGENESIS OF PRO-914</scope>
</reference>
<reference evidence="19" key="10">
    <citation type="journal article" date="2007" name="Hum. Mol. Genet.">
        <title>The testis anion transporter 1 (Slc26a8) is required for sperm terminal differentiation and male fertility in the mouse.</title>
        <authorList>
            <person name="Toure A."/>
            <person name="Lhuillier P."/>
            <person name="Gossen J.A."/>
            <person name="Kuil C.W."/>
            <person name="Lhote D."/>
            <person name="Jegou B."/>
            <person name="Escalier D."/>
            <person name="Gacon G."/>
        </authorList>
    </citation>
    <scope>SUBCELLULAR LOCATION</scope>
</reference>
<reference key="11">
    <citation type="journal article" date="2013" name="Am. J. Hum. Genet.">
        <title>Missense mutations in SLC26A8, encoding a sperm-specific activator of CFTR, are associated with human asthenozoospermia.</title>
        <authorList>
            <person name="Dirami T."/>
            <person name="Rode B."/>
            <person name="Jollivet M."/>
            <person name="Da Silva N."/>
            <person name="Escalier D."/>
            <person name="Gaitch N."/>
            <person name="Norez C."/>
            <person name="Tuffery P."/>
            <person name="Wolf J.P."/>
            <person name="Becq F."/>
            <person name="Ray P.F."/>
            <person name="Dulioust E."/>
            <person name="Gacon G."/>
            <person name="Bienvenu T."/>
            <person name="Toure A."/>
        </authorList>
    </citation>
    <scope>VARIANTS SPGF3 GLN-87; LYS-812 AND CYS-954</scope>
    <scope>CHARACTERIZATION OF VARIANTS SPGF3 GLN-87; LYS-812 AND CYS-954</scope>
    <scope>FUNCTION</scope>
    <scope>INTERACTION WITH CFTR</scope>
    <scope>SUBCELLULAR LOCATION</scope>
</reference>
<evidence type="ECO:0000250" key="1">
    <source>
        <dbReference type="UniProtKB" id="Q8R0C3"/>
    </source>
</evidence>
<evidence type="ECO:0000255" key="2"/>
<evidence type="ECO:0000255" key="3">
    <source>
        <dbReference type="PROSITE-ProRule" id="PRU00198"/>
    </source>
</evidence>
<evidence type="ECO:0000256" key="4">
    <source>
        <dbReference type="SAM" id="MobiDB-lite"/>
    </source>
</evidence>
<evidence type="ECO:0000269" key="5">
    <source>
    </source>
</evidence>
<evidence type="ECO:0000269" key="6">
    <source>
    </source>
</evidence>
<evidence type="ECO:0000269" key="7">
    <source>
    </source>
</evidence>
<evidence type="ECO:0000269" key="8">
    <source>
    </source>
</evidence>
<evidence type="ECO:0000269" key="9">
    <source>
    </source>
</evidence>
<evidence type="ECO:0000269" key="10">
    <source>
    </source>
</evidence>
<evidence type="ECO:0000269" key="11">
    <source>
    </source>
</evidence>
<evidence type="ECO:0000269" key="12">
    <source>
    </source>
</evidence>
<evidence type="ECO:0000269" key="13">
    <source>
    </source>
</evidence>
<evidence type="ECO:0000269" key="14">
    <source ref="3"/>
</evidence>
<evidence type="ECO:0000303" key="15">
    <source>
    </source>
</evidence>
<evidence type="ECO:0000303" key="16">
    <source>
    </source>
</evidence>
<evidence type="ECO:0000303" key="17">
    <source>
    </source>
</evidence>
<evidence type="ECO:0000303" key="18">
    <source>
    </source>
</evidence>
<evidence type="ECO:0000305" key="19"/>
<evidence type="ECO:0000305" key="20">
    <source>
    </source>
</evidence>
<evidence type="ECO:0000312" key="21">
    <source>
        <dbReference type="EMBL" id="AAH25408.1"/>
    </source>
</evidence>
<evidence type="ECO:0000312" key="22">
    <source>
        <dbReference type="EMBL" id="AAK95666.1"/>
    </source>
</evidence>
<evidence type="ECO:0000312" key="23">
    <source>
        <dbReference type="EMBL" id="AAL26868.1"/>
    </source>
</evidence>
<evidence type="ECO:0000312" key="24">
    <source>
        <dbReference type="EMBL" id="BAB71408.1"/>
    </source>
</evidence>
<evidence type="ECO:0000312" key="25">
    <source>
        <dbReference type="EMBL" id="Z95152"/>
    </source>
</evidence>
<feature type="chain" id="PRO_0000322586" description="Testis anion transporter 1">
    <location>
        <begin position="1"/>
        <end position="970"/>
    </location>
</feature>
<feature type="topological domain" description="Cytoplasmic" evidence="2">
    <location>
        <begin position="1"/>
        <end position="95"/>
    </location>
</feature>
<feature type="transmembrane region" description="Helical" evidence="2">
    <location>
        <begin position="96"/>
        <end position="116"/>
    </location>
</feature>
<feature type="topological domain" description="Extracellular" evidence="2">
    <location>
        <begin position="117"/>
        <end position="119"/>
    </location>
</feature>
<feature type="transmembrane region" description="Helical" evidence="2">
    <location>
        <begin position="120"/>
        <end position="140"/>
    </location>
</feature>
<feature type="topological domain" description="Cytoplasmic" evidence="2">
    <location>
        <begin position="141"/>
        <end position="146"/>
    </location>
</feature>
<feature type="transmembrane region" description="Helical" evidence="2">
    <location>
        <begin position="147"/>
        <end position="167"/>
    </location>
</feature>
<feature type="topological domain" description="Extracellular" evidence="2">
    <location>
        <begin position="168"/>
        <end position="202"/>
    </location>
</feature>
<feature type="transmembrane region" description="Helical" evidence="2">
    <location>
        <begin position="203"/>
        <end position="223"/>
    </location>
</feature>
<feature type="topological domain" description="Cytoplasmic" evidence="2">
    <location>
        <begin position="224"/>
        <end position="232"/>
    </location>
</feature>
<feature type="transmembrane region" description="Helical" evidence="2">
    <location>
        <begin position="233"/>
        <end position="253"/>
    </location>
</feature>
<feature type="topological domain" description="Extracellular" evidence="2">
    <location>
        <begin position="254"/>
        <end position="270"/>
    </location>
</feature>
<feature type="transmembrane region" description="Helical" evidence="2">
    <location>
        <begin position="271"/>
        <end position="291"/>
    </location>
</feature>
<feature type="topological domain" description="Cytoplasmic" evidence="2">
    <location>
        <begin position="292"/>
        <end position="307"/>
    </location>
</feature>
<feature type="transmembrane region" description="Helical" evidence="2">
    <location>
        <begin position="308"/>
        <end position="328"/>
    </location>
</feature>
<feature type="topological domain" description="Extracellular" evidence="2">
    <location>
        <begin position="329"/>
        <end position="355"/>
    </location>
</feature>
<feature type="transmembrane region" description="Helical" evidence="2">
    <location>
        <begin position="356"/>
        <end position="376"/>
    </location>
</feature>
<feature type="topological domain" description="Cytoplasmic" evidence="2">
    <location>
        <begin position="377"/>
        <end position="392"/>
    </location>
</feature>
<feature type="transmembrane region" description="Helical" evidence="2">
    <location>
        <begin position="393"/>
        <end position="413"/>
    </location>
</feature>
<feature type="topological domain" description="Extracellular" evidence="2">
    <location>
        <begin position="414"/>
        <end position="429"/>
    </location>
</feature>
<feature type="transmembrane region" description="Helical" evidence="2">
    <location>
        <begin position="430"/>
        <end position="450"/>
    </location>
</feature>
<feature type="topological domain" description="Cytoplasmic" evidence="2">
    <location>
        <begin position="451"/>
        <end position="452"/>
    </location>
</feature>
<feature type="transmembrane region" description="Helical" evidence="2">
    <location>
        <begin position="453"/>
        <end position="473"/>
    </location>
</feature>
<feature type="topological domain" description="Extracellular" evidence="2">
    <location>
        <begin position="474"/>
        <end position="497"/>
    </location>
</feature>
<feature type="transmembrane region" description="Helical" evidence="2">
    <location>
        <begin position="498"/>
        <end position="518"/>
    </location>
</feature>
<feature type="topological domain" description="Cytoplasmic" evidence="2">
    <location>
        <begin position="519"/>
        <end position="970"/>
    </location>
</feature>
<feature type="domain" description="STAS" evidence="3">
    <location>
        <begin position="543"/>
        <end position="795"/>
    </location>
</feature>
<feature type="region of interest" description="Interaction with RACGAP1" evidence="5">
    <location>
        <begin position="664"/>
        <end position="970"/>
    </location>
</feature>
<feature type="region of interest" description="Disordered" evidence="4">
    <location>
        <begin position="858"/>
        <end position="970"/>
    </location>
</feature>
<feature type="compositionally biased region" description="Acidic residues" evidence="4">
    <location>
        <begin position="858"/>
        <end position="868"/>
    </location>
</feature>
<feature type="compositionally biased region" description="Basic and acidic residues" evidence="4">
    <location>
        <begin position="877"/>
        <end position="898"/>
    </location>
</feature>
<feature type="compositionally biased region" description="Low complexity" evidence="4">
    <location>
        <begin position="938"/>
        <end position="948"/>
    </location>
</feature>
<feature type="glycosylation site" description="N-linked (GlcNAc...) asparagine" evidence="2">
    <location>
        <position position="192"/>
    </location>
</feature>
<feature type="splice variant" id="VSP_052704" description="In isoform 3." evidence="16">
    <location>
        <begin position="2"/>
        <end position="419"/>
    </location>
</feature>
<feature type="splice variant" id="VSP_052705" description="In isoform 2." evidence="18">
    <location>
        <begin position="210"/>
        <end position="314"/>
    </location>
</feature>
<feature type="splice variant" id="VSP_052706" description="In isoform 3." evidence="16">
    <original>IQDKSGGRQ</original>
    <variation>VSLQLALSP</variation>
    <location>
        <begin position="420"/>
        <end position="428"/>
    </location>
</feature>
<feature type="splice variant" id="VSP_052707" description="In isoform 4." evidence="17">
    <original>ICNAFQNANILILIAGCHSSIVRA</original>
    <variation>VSTEEALAGALIPLLPSQPHPDPD</variation>
    <location>
        <begin position="745"/>
        <end position="768"/>
    </location>
</feature>
<feature type="splice variant" id="VSP_052708" description="In isoform 4." evidence="17">
    <location>
        <begin position="769"/>
        <end position="970"/>
    </location>
</feature>
<feature type="sequence variant" id="VAR_039464" description="Not a cause of male infertility; dbSNP:rs743923." evidence="5 9 10 14">
    <original>V</original>
    <variation>M</variation>
    <location>
        <position position="73"/>
    </location>
</feature>
<feature type="sequence variant" id="VAR_070058" description="In SPGF3; there is a reduced interactions with CFTR and complete failure to activate CFTR-dependent anion transport; dbSNP:rs140210148." evidence="13">
    <original>R</original>
    <variation>Q</variation>
    <location>
        <position position="87"/>
    </location>
</feature>
<feature type="sequence variant" id="VAR_039465" description="Not a cause of male infertility; dbSNP:rs17713154." evidence="10 14">
    <original>I</original>
    <variation>V</variation>
    <location>
        <position position="148"/>
    </location>
</feature>
<feature type="sequence variant" id="VAR_039466" description="Not a cause of male infertility; dbSNP:rs17707331." evidence="10 14">
    <original>S</original>
    <variation>N</variation>
    <location>
        <position position="230"/>
    </location>
</feature>
<feature type="sequence variant" id="VAR_039467" description="Not a cause of male infertility; dbSNP:rs2295852." evidence="5 9 10 14">
    <original>I</original>
    <variation>V</variation>
    <location>
        <position position="639"/>
    </location>
</feature>
<feature type="sequence variant" id="VAR_070059" description="In SPGF3; there is a reduced interactions with CFTR and complete failure to activate CFTR-dependent anion transport; dbSNP:rs142724470." evidence="13">
    <original>E</original>
    <variation>K</variation>
    <location>
        <position position="812"/>
    </location>
</feature>
<feature type="sequence variant" id="VAR_070060" description="In SPGF3; there is a reduced interactions with CFTR and complete failure to activate CFTR-dependent anion transport; dbSNP:rs398123027." evidence="13">
    <original>R</original>
    <variation>C</variation>
    <location>
        <position position="954"/>
    </location>
</feature>
<feature type="mutagenesis site" description="Not a cause of male infertility." evidence="10">
    <original>P</original>
    <variation>S</variation>
    <location>
        <position position="914"/>
    </location>
</feature>
<feature type="sequence conflict" description="In Ref. 3; AAL26868/AAO26699." evidence="19" ref="3">
    <original>N</original>
    <variation>D</variation>
    <location>
        <position position="168"/>
    </location>
</feature>
<feature type="sequence conflict" description="In Ref. 3; AAL26868/AAO26699." evidence="19" ref="3">
    <original>S</original>
    <variation>C</variation>
    <location>
        <position position="560"/>
    </location>
</feature>
<gene>
    <name evidence="22" type="primary">SLC26A8</name>
    <name evidence="15" type="synonym">TAT1</name>
</gene>